<keyword id="KW-1185">Reference proteome</keyword>
<keyword id="KW-0687">Ribonucleoprotein</keyword>
<keyword id="KW-0689">Ribosomal protein</keyword>
<dbReference type="EMBL" id="CP000016">
    <property type="protein sequence ID" value="AAZ40705.1"/>
    <property type="molecule type" value="Genomic_DNA"/>
</dbReference>
<dbReference type="RefSeq" id="WP_011282611.1">
    <property type="nucleotide sequence ID" value="NC_007292.1"/>
</dbReference>
<dbReference type="SMR" id="Q493X9"/>
<dbReference type="STRING" id="291272.BPEN_059"/>
<dbReference type="KEGG" id="bpn:BPEN_059"/>
<dbReference type="eggNOG" id="COG0828">
    <property type="taxonomic scope" value="Bacteria"/>
</dbReference>
<dbReference type="HOGENOM" id="CLU_159258_1_0_6"/>
<dbReference type="OrthoDB" id="9799244at2"/>
<dbReference type="Proteomes" id="UP000007794">
    <property type="component" value="Chromosome"/>
</dbReference>
<dbReference type="GO" id="GO:1990904">
    <property type="term" value="C:ribonucleoprotein complex"/>
    <property type="evidence" value="ECO:0007669"/>
    <property type="project" value="UniProtKB-KW"/>
</dbReference>
<dbReference type="GO" id="GO:0005840">
    <property type="term" value="C:ribosome"/>
    <property type="evidence" value="ECO:0007669"/>
    <property type="project" value="UniProtKB-KW"/>
</dbReference>
<dbReference type="GO" id="GO:0003735">
    <property type="term" value="F:structural constituent of ribosome"/>
    <property type="evidence" value="ECO:0007669"/>
    <property type="project" value="InterPro"/>
</dbReference>
<dbReference type="GO" id="GO:0006412">
    <property type="term" value="P:translation"/>
    <property type="evidence" value="ECO:0007669"/>
    <property type="project" value="UniProtKB-UniRule"/>
</dbReference>
<dbReference type="FunFam" id="1.20.5.1150:FF:000001">
    <property type="entry name" value="30S ribosomal protein S21"/>
    <property type="match status" value="1"/>
</dbReference>
<dbReference type="Gene3D" id="1.20.5.1150">
    <property type="entry name" value="Ribosomal protein S8"/>
    <property type="match status" value="1"/>
</dbReference>
<dbReference type="HAMAP" id="MF_00358">
    <property type="entry name" value="Ribosomal_bS21"/>
    <property type="match status" value="1"/>
</dbReference>
<dbReference type="InterPro" id="IPR001911">
    <property type="entry name" value="Ribosomal_bS21"/>
</dbReference>
<dbReference type="InterPro" id="IPR018278">
    <property type="entry name" value="Ribosomal_bS21_CS"/>
</dbReference>
<dbReference type="InterPro" id="IPR038380">
    <property type="entry name" value="Ribosomal_bS21_sf"/>
</dbReference>
<dbReference type="NCBIfam" id="TIGR00030">
    <property type="entry name" value="S21p"/>
    <property type="match status" value="1"/>
</dbReference>
<dbReference type="PANTHER" id="PTHR21109">
    <property type="entry name" value="MITOCHONDRIAL 28S RIBOSOMAL PROTEIN S21"/>
    <property type="match status" value="1"/>
</dbReference>
<dbReference type="PANTHER" id="PTHR21109:SF22">
    <property type="entry name" value="SMALL RIBOSOMAL SUBUNIT PROTEIN BS21"/>
    <property type="match status" value="1"/>
</dbReference>
<dbReference type="Pfam" id="PF01165">
    <property type="entry name" value="Ribosomal_S21"/>
    <property type="match status" value="1"/>
</dbReference>
<dbReference type="PRINTS" id="PR00976">
    <property type="entry name" value="RIBOSOMALS21"/>
</dbReference>
<dbReference type="PROSITE" id="PS01181">
    <property type="entry name" value="RIBOSOMAL_S21"/>
    <property type="match status" value="1"/>
</dbReference>
<gene>
    <name evidence="1" type="primary">rpsU</name>
    <name type="ordered locus">BPEN_059</name>
</gene>
<feature type="chain" id="PRO_0000266629" description="Small ribosomal subunit protein bS21">
    <location>
        <begin position="1"/>
        <end position="71"/>
    </location>
</feature>
<comment type="similarity">
    <text evidence="1">Belongs to the bacterial ribosomal protein bS21 family.</text>
</comment>
<reference key="1">
    <citation type="journal article" date="2005" name="Genome Res.">
        <title>Genome sequence of Blochmannia pennsylvanicus indicates parallel evolutionary trends among bacterial mutualists of insects.</title>
        <authorList>
            <person name="Degnan P.H."/>
            <person name="Lazarus A.B."/>
            <person name="Wernegreen J.J."/>
        </authorList>
    </citation>
    <scope>NUCLEOTIDE SEQUENCE [LARGE SCALE GENOMIC DNA]</scope>
    <source>
        <strain>BPEN</strain>
    </source>
</reference>
<protein>
    <recommendedName>
        <fullName evidence="1">Small ribosomal subunit protein bS21</fullName>
    </recommendedName>
    <alternativeName>
        <fullName evidence="2">30S ribosomal protein S21</fullName>
    </alternativeName>
</protein>
<organism>
    <name type="scientific">Blochmanniella pennsylvanica (strain BPEN)</name>
    <dbReference type="NCBI Taxonomy" id="291272"/>
    <lineage>
        <taxon>Bacteria</taxon>
        <taxon>Pseudomonadati</taxon>
        <taxon>Pseudomonadota</taxon>
        <taxon>Gammaproteobacteria</taxon>
        <taxon>Enterobacterales</taxon>
        <taxon>Enterobacteriaceae</taxon>
        <taxon>ant endosymbionts</taxon>
        <taxon>Candidatus Blochmanniella</taxon>
    </lineage>
</organism>
<proteinExistence type="inferred from homology"/>
<evidence type="ECO:0000255" key="1">
    <source>
        <dbReference type="HAMAP-Rule" id="MF_00358"/>
    </source>
</evidence>
<evidence type="ECO:0000305" key="2"/>
<sequence length="71" mass="8676">MPIIKVRENESFDVALRRFKRSCEKSGILSEVRRREFYEKPTTERKRAKASAIKRHIKKLSRENLRRIRLY</sequence>
<accession>Q493X9</accession>
<name>RS21_BLOPB</name>